<gene>
    <name evidence="1" type="primary">rpsE</name>
    <name type="ordered locus">lpl0386</name>
</gene>
<sequence>MSFDELPKSDGYQEKLVSVTRTAKVVKGGRVFGFAVLVVVGDGKGKVGFGRGKAREVPIAIQKAMDQAKKNMVYIPLSGTTIFHEITWNYGASKVFMKPASEGTGIIAGGAMRAVLEVLGVQNILAKSIGSTNPSNIVRATIGALTHIGTPDYVAAKRGKTVEEVMAG</sequence>
<accession>Q5WZJ5</accession>
<keyword id="KW-0687">Ribonucleoprotein</keyword>
<keyword id="KW-0689">Ribosomal protein</keyword>
<keyword id="KW-0694">RNA-binding</keyword>
<keyword id="KW-0699">rRNA-binding</keyword>
<name>RS5_LEGPL</name>
<reference key="1">
    <citation type="journal article" date="2004" name="Nat. Genet.">
        <title>Evidence in the Legionella pneumophila genome for exploitation of host cell functions and high genome plasticity.</title>
        <authorList>
            <person name="Cazalet C."/>
            <person name="Rusniok C."/>
            <person name="Brueggemann H."/>
            <person name="Zidane N."/>
            <person name="Magnier A."/>
            <person name="Ma L."/>
            <person name="Tichit M."/>
            <person name="Jarraud S."/>
            <person name="Bouchier C."/>
            <person name="Vandenesch F."/>
            <person name="Kunst F."/>
            <person name="Etienne J."/>
            <person name="Glaser P."/>
            <person name="Buchrieser C."/>
        </authorList>
    </citation>
    <scope>NUCLEOTIDE SEQUENCE [LARGE SCALE GENOMIC DNA]</scope>
    <source>
        <strain>Lens</strain>
    </source>
</reference>
<evidence type="ECO:0000255" key="1">
    <source>
        <dbReference type="HAMAP-Rule" id="MF_01307"/>
    </source>
</evidence>
<evidence type="ECO:0000305" key="2"/>
<feature type="chain" id="PRO_0000131534" description="Small ribosomal subunit protein uS5">
    <location>
        <begin position="1"/>
        <end position="168"/>
    </location>
</feature>
<feature type="domain" description="S5 DRBM" evidence="1">
    <location>
        <begin position="12"/>
        <end position="75"/>
    </location>
</feature>
<organism>
    <name type="scientific">Legionella pneumophila (strain Lens)</name>
    <dbReference type="NCBI Taxonomy" id="297245"/>
    <lineage>
        <taxon>Bacteria</taxon>
        <taxon>Pseudomonadati</taxon>
        <taxon>Pseudomonadota</taxon>
        <taxon>Gammaproteobacteria</taxon>
        <taxon>Legionellales</taxon>
        <taxon>Legionellaceae</taxon>
        <taxon>Legionella</taxon>
    </lineage>
</organism>
<dbReference type="EMBL" id="CR628337">
    <property type="protein sequence ID" value="CAH14617.1"/>
    <property type="molecule type" value="Genomic_DNA"/>
</dbReference>
<dbReference type="RefSeq" id="WP_010946095.1">
    <property type="nucleotide sequence ID" value="NC_006369.1"/>
</dbReference>
<dbReference type="SMR" id="Q5WZJ5"/>
<dbReference type="GeneID" id="57034349"/>
<dbReference type="KEGG" id="lpf:lpl0386"/>
<dbReference type="LegioList" id="lpl0386"/>
<dbReference type="HOGENOM" id="CLU_065898_2_2_6"/>
<dbReference type="Proteomes" id="UP000002517">
    <property type="component" value="Chromosome"/>
</dbReference>
<dbReference type="GO" id="GO:0015935">
    <property type="term" value="C:small ribosomal subunit"/>
    <property type="evidence" value="ECO:0007669"/>
    <property type="project" value="InterPro"/>
</dbReference>
<dbReference type="GO" id="GO:0019843">
    <property type="term" value="F:rRNA binding"/>
    <property type="evidence" value="ECO:0007669"/>
    <property type="project" value="UniProtKB-UniRule"/>
</dbReference>
<dbReference type="GO" id="GO:0003735">
    <property type="term" value="F:structural constituent of ribosome"/>
    <property type="evidence" value="ECO:0007669"/>
    <property type="project" value="InterPro"/>
</dbReference>
<dbReference type="GO" id="GO:0006412">
    <property type="term" value="P:translation"/>
    <property type="evidence" value="ECO:0007669"/>
    <property type="project" value="UniProtKB-UniRule"/>
</dbReference>
<dbReference type="FunFam" id="3.30.160.20:FF:000001">
    <property type="entry name" value="30S ribosomal protein S5"/>
    <property type="match status" value="1"/>
</dbReference>
<dbReference type="FunFam" id="3.30.230.10:FF:000002">
    <property type="entry name" value="30S ribosomal protein S5"/>
    <property type="match status" value="1"/>
</dbReference>
<dbReference type="Gene3D" id="3.30.160.20">
    <property type="match status" value="1"/>
</dbReference>
<dbReference type="Gene3D" id="3.30.230.10">
    <property type="match status" value="1"/>
</dbReference>
<dbReference type="HAMAP" id="MF_01307_B">
    <property type="entry name" value="Ribosomal_uS5_B"/>
    <property type="match status" value="1"/>
</dbReference>
<dbReference type="InterPro" id="IPR020568">
    <property type="entry name" value="Ribosomal_Su5_D2-typ_SF"/>
</dbReference>
<dbReference type="InterPro" id="IPR000851">
    <property type="entry name" value="Ribosomal_uS5"/>
</dbReference>
<dbReference type="InterPro" id="IPR005712">
    <property type="entry name" value="Ribosomal_uS5_bac-type"/>
</dbReference>
<dbReference type="InterPro" id="IPR005324">
    <property type="entry name" value="Ribosomal_uS5_C"/>
</dbReference>
<dbReference type="InterPro" id="IPR013810">
    <property type="entry name" value="Ribosomal_uS5_N"/>
</dbReference>
<dbReference type="InterPro" id="IPR018192">
    <property type="entry name" value="Ribosomal_uS5_N_CS"/>
</dbReference>
<dbReference type="InterPro" id="IPR014721">
    <property type="entry name" value="Ribsml_uS5_D2-typ_fold_subgr"/>
</dbReference>
<dbReference type="NCBIfam" id="TIGR01021">
    <property type="entry name" value="rpsE_bact"/>
    <property type="match status" value="1"/>
</dbReference>
<dbReference type="PANTHER" id="PTHR48277">
    <property type="entry name" value="MITOCHONDRIAL RIBOSOMAL PROTEIN S5"/>
    <property type="match status" value="1"/>
</dbReference>
<dbReference type="PANTHER" id="PTHR48277:SF1">
    <property type="entry name" value="MITOCHONDRIAL RIBOSOMAL PROTEIN S5"/>
    <property type="match status" value="1"/>
</dbReference>
<dbReference type="Pfam" id="PF00333">
    <property type="entry name" value="Ribosomal_S5"/>
    <property type="match status" value="1"/>
</dbReference>
<dbReference type="Pfam" id="PF03719">
    <property type="entry name" value="Ribosomal_S5_C"/>
    <property type="match status" value="1"/>
</dbReference>
<dbReference type="SUPFAM" id="SSF54768">
    <property type="entry name" value="dsRNA-binding domain-like"/>
    <property type="match status" value="1"/>
</dbReference>
<dbReference type="SUPFAM" id="SSF54211">
    <property type="entry name" value="Ribosomal protein S5 domain 2-like"/>
    <property type="match status" value="1"/>
</dbReference>
<dbReference type="PROSITE" id="PS00585">
    <property type="entry name" value="RIBOSOMAL_S5"/>
    <property type="match status" value="1"/>
</dbReference>
<dbReference type="PROSITE" id="PS50881">
    <property type="entry name" value="S5_DSRBD"/>
    <property type="match status" value="1"/>
</dbReference>
<proteinExistence type="inferred from homology"/>
<protein>
    <recommendedName>
        <fullName evidence="1">Small ribosomal subunit protein uS5</fullName>
    </recommendedName>
    <alternativeName>
        <fullName evidence="2">30S ribosomal protein S5</fullName>
    </alternativeName>
</protein>
<comment type="function">
    <text evidence="1">With S4 and S12 plays an important role in translational accuracy.</text>
</comment>
<comment type="function">
    <text evidence="1">Located at the back of the 30S subunit body where it stabilizes the conformation of the head with respect to the body.</text>
</comment>
<comment type="subunit">
    <text evidence="1">Part of the 30S ribosomal subunit. Contacts proteins S4 and S8.</text>
</comment>
<comment type="domain">
    <text>The N-terminal domain interacts with the head of the 30S subunit; the C-terminal domain interacts with the body and contacts protein S4. The interaction surface between S4 and S5 is involved in control of translational fidelity.</text>
</comment>
<comment type="similarity">
    <text evidence="1">Belongs to the universal ribosomal protein uS5 family.</text>
</comment>